<comment type="function">
    <text evidence="1">Plays an important role in promoting lung pathology in both primary viral infection and secondary bacterial infection. Promotes alteration of mitochondrial morphology, dissipation of mitochondrial membrane potential, and cell death. Alternatively, inhibits the production of interferon in the infected cell at the level of host mitochondrial antiviral signaling MAVS. Its level of expression differs greatly depending on which cell type is infected, in a manner that is independent of the levels of expression of other viral proteins. Monocytic cells are more affected than epithelial cells. Seems to disable virus-infected monocytes or other host innate immune cells. During early stage of infection, predisposes the mitochondria to permeability transition through interaction with host SLC25A6/ANT3 and VDAC1. These proteins participate in the formation of the permeability transition pore complex (PTPC) responsible of the release of mitochondrial products that triggers apoptosis.</text>
</comment>
<comment type="subunit">
    <text evidence="1">Oligomer. Interacts with human SLC25A6/ANT3 and VDAC1. Interacts with host MAVS.</text>
</comment>
<comment type="subcellular location">
    <subcellularLocation>
        <location evidence="1">Host mitochondrion inner membrane</location>
    </subcellularLocation>
    <subcellularLocation>
        <location evidence="1">Host nucleus</location>
    </subcellularLocation>
    <subcellularLocation>
        <location evidence="1">Host cytoplasm</location>
        <location evidence="1">Host cytosol</location>
    </subcellularLocation>
    <text evidence="1">Inner mitochondrial membrane in most cells types. Otherwise is detected in the nucleus and cytosol.</text>
</comment>
<comment type="miscellaneous">
    <text>Is not encoded in all strains, and seems to be dispensable for replication.</text>
</comment>
<comment type="similarity">
    <text evidence="1">Belongs to the influenza viruses PB1-F2 family.</text>
</comment>
<evidence type="ECO:0000255" key="1">
    <source>
        <dbReference type="HAMAP-Rule" id="MF_04064"/>
    </source>
</evidence>
<evidence type="ECO:0000256" key="2">
    <source>
        <dbReference type="SAM" id="MobiDB-lite"/>
    </source>
</evidence>
<feature type="chain" id="PRO_0000278716" description="Protein PB1-F2">
    <location>
        <begin position="1"/>
        <end position="90"/>
    </location>
</feature>
<feature type="region of interest" description="Disordered" evidence="2">
    <location>
        <begin position="1"/>
        <end position="31"/>
    </location>
</feature>
<feature type="region of interest" description="Mitochondrial targeting sequence" evidence="1">
    <location>
        <begin position="65"/>
        <end position="87"/>
    </location>
</feature>
<feature type="compositionally biased region" description="Polar residues" evidence="2">
    <location>
        <begin position="1"/>
        <end position="29"/>
    </location>
</feature>
<feature type="site" description="Low pathogenicity" evidence="1">
    <location>
        <position position="66"/>
    </location>
</feature>
<reference key="1">
    <citation type="submission" date="2005-12" db="EMBL/GenBank/DDBJ databases">
        <title>The NIAID influenza genome sequencing project.</title>
        <authorList>
            <person name="Ghedin E."/>
            <person name="Spiro D."/>
            <person name="Miller N."/>
            <person name="Zaborsky J."/>
            <person name="Feldblyum T."/>
            <person name="Subbu V."/>
            <person name="Shumway M."/>
            <person name="Sparenborg J."/>
            <person name="Groveman L."/>
            <person name="Halpin R."/>
            <person name="Sitz J."/>
            <person name="Koo H."/>
            <person name="Salzberg S.L."/>
            <person name="Webster R.G."/>
            <person name="Hoffmann E."/>
            <person name="Krauss S."/>
            <person name="Naeve C."/>
            <person name="Bao Y."/>
            <person name="Bolotov P."/>
            <person name="Dernovoy D."/>
            <person name="Kiryutin B."/>
            <person name="Lipman D.J."/>
            <person name="Tatusova T."/>
        </authorList>
    </citation>
    <scope>NUCLEOTIDE SEQUENCE [GENOMIC RNA]</scope>
</reference>
<gene>
    <name evidence="1" type="primary">PB1</name>
</gene>
<accession>Q2VNC4</accession>
<organism>
    <name type="scientific">Influenza A virus (strain A/Memphis/18/1978 H3N2)</name>
    <dbReference type="NCBI Taxonomy" id="383579"/>
    <lineage>
        <taxon>Viruses</taxon>
        <taxon>Riboviria</taxon>
        <taxon>Orthornavirae</taxon>
        <taxon>Negarnaviricota</taxon>
        <taxon>Polyploviricotina</taxon>
        <taxon>Insthoviricetes</taxon>
        <taxon>Articulavirales</taxon>
        <taxon>Orthomyxoviridae</taxon>
        <taxon>Alphainfluenzavirus</taxon>
        <taxon>Alphainfluenzavirus influenzae</taxon>
        <taxon>Influenza A virus</taxon>
    </lineage>
</organism>
<name>PB1F2_I78A8</name>
<dbReference type="EMBL" id="CY006713">
    <property type="protein sequence ID" value="ABB96350.1"/>
    <property type="molecule type" value="Genomic_RNA"/>
</dbReference>
<dbReference type="SMR" id="Q2VNC4"/>
<dbReference type="Proteomes" id="UP000008574">
    <property type="component" value="Genome"/>
</dbReference>
<dbReference type="GO" id="GO:0044164">
    <property type="term" value="C:host cell cytosol"/>
    <property type="evidence" value="ECO:0007669"/>
    <property type="project" value="UniProtKB-SubCell"/>
</dbReference>
<dbReference type="GO" id="GO:0044192">
    <property type="term" value="C:host cell mitochondrial inner membrane"/>
    <property type="evidence" value="ECO:0007669"/>
    <property type="project" value="UniProtKB-SubCell"/>
</dbReference>
<dbReference type="GO" id="GO:0042025">
    <property type="term" value="C:host cell nucleus"/>
    <property type="evidence" value="ECO:0007669"/>
    <property type="project" value="UniProtKB-SubCell"/>
</dbReference>
<dbReference type="GO" id="GO:0016020">
    <property type="term" value="C:membrane"/>
    <property type="evidence" value="ECO:0007669"/>
    <property type="project" value="UniProtKB-UniRule"/>
</dbReference>
<dbReference type="GO" id="GO:0052150">
    <property type="term" value="P:symbiont-mediated perturbation of host apoptosis"/>
    <property type="evidence" value="ECO:0007669"/>
    <property type="project" value="UniProtKB-KW"/>
</dbReference>
<dbReference type="GO" id="GO:0039545">
    <property type="term" value="P:symbiont-mediated suppression of host cytoplasmic pattern recognition receptor signaling pathway via inhibition of MAVS activity"/>
    <property type="evidence" value="ECO:0007669"/>
    <property type="project" value="UniProtKB-KW"/>
</dbReference>
<dbReference type="HAMAP" id="MF_04064">
    <property type="entry name" value="INFV_PB1F2"/>
    <property type="match status" value="1"/>
</dbReference>
<dbReference type="InterPro" id="IPR021045">
    <property type="entry name" value="Flu_proapoptotic_PB1-F2"/>
</dbReference>
<dbReference type="Pfam" id="PF11986">
    <property type="entry name" value="PB1-F2"/>
    <property type="match status" value="1"/>
</dbReference>
<protein>
    <recommendedName>
        <fullName evidence="1">Protein PB1-F2</fullName>
    </recommendedName>
</protein>
<sequence length="90" mass="10820">MEQEQDTPWTQLTEHINIQKKGNGQQTQKLGRPNLTRLMDHYLRIMSQVDMHKQTVSWKLWLSLRNPTQGSLKTRALKQWKSFNKQEWTD</sequence>
<proteinExistence type="inferred from homology"/>
<keyword id="KW-0053">Apoptosis</keyword>
<keyword id="KW-1035">Host cytoplasm</keyword>
<keyword id="KW-1043">Host membrane</keyword>
<keyword id="KW-1045">Host mitochondrion</keyword>
<keyword id="KW-1046">Host mitochondrion inner membrane</keyword>
<keyword id="KW-1048">Host nucleus</keyword>
<keyword id="KW-0945">Host-virus interaction</keyword>
<keyword id="KW-1090">Inhibition of host innate immune response by virus</keyword>
<keyword id="KW-1097">Inhibition of host MAVS by virus</keyword>
<keyword id="KW-1113">Inhibition of host RLR pathway by virus</keyword>
<keyword id="KW-0472">Membrane</keyword>
<keyword id="KW-1119">Modulation of host cell apoptosis by virus</keyword>
<keyword id="KW-0899">Viral immunoevasion</keyword>
<organismHost>
    <name type="scientific">Aves</name>
    <dbReference type="NCBI Taxonomy" id="8782"/>
</organismHost>
<organismHost>
    <name type="scientific">Cetacea</name>
    <name type="common">whales</name>
    <dbReference type="NCBI Taxonomy" id="9721"/>
</organismHost>
<organismHost>
    <name type="scientific">Homo sapiens</name>
    <name type="common">Human</name>
    <dbReference type="NCBI Taxonomy" id="9606"/>
</organismHost>
<organismHost>
    <name type="scientific">Phocidae</name>
    <name type="common">true seals</name>
    <dbReference type="NCBI Taxonomy" id="9709"/>
</organismHost>
<organismHost>
    <name type="scientific">Sus scrofa</name>
    <name type="common">Pig</name>
    <dbReference type="NCBI Taxonomy" id="9823"/>
</organismHost>